<protein>
    <recommendedName>
        <fullName>DNA repair protein RAD5</fullName>
        <ecNumber>3.6.4.-</ecNumber>
    </recommendedName>
</protein>
<name>RAD5_GIBZE</name>
<sequence length="1154" mass="129896">MEQPLGDMSPWHPDNHMDPEPPTKRRRFLADPDEASSDPVAHDSSPLPPSKRFFENEDETVPKTERLETIDEKPNNASPKSSSTELPTSQQEPSPSFDQETFETFIGDKVSEDVLSAIRSNCGNNIERAVNMYFDGTYKKFMKKSTRPAPPRPAASSSRTPNVSGERTIPIQTSKRMPNERYIGAFGVEGWATRSGTNLLKHGDIVKIERQKRAPPPTKSKGKAGPVTPSRGFGAPRRQDVVVRFTTQSGTEVGRLAREAANWVSALIDEKICRFEGTVVYAPERLRTNDTIFLQLRCSLLNSAFFSRPFQLADDRSAAFFNQNETNDEKTLRMRQVALVKLFQEINLHPTLTNSATKDGRKGLLQAAEQDEEKQKEVKKSDGNGTNNTKEANSSQSSDTEDGEELEQDQLDALYKKAQSFDFNTPEAEPADTFAMTLRKYQKQALHWMMAKEKDEKSHREPLMHPLWEQYEWPLKDVDENDLPQIEGQSKFYVNPYSGDLSLDFPVQEQHCLGGILADEMGLGKTIQMLSLVHTHRSEVALEARQSVVARSNVNQLTRLGKNSESILDAPCTTLVVAPMSLLSQWQSEAEKASKDGTMKTELYYGNEKSSNLQALCCASNAANAPDLVITSYGVVLSEFSSLAARNGDKSFHNGLFSLRFFRIIIDEAHHIKNRSSKTSKACYEISATHRWALTGTPIVNKLEDLFSLVRFLGVEPWNNFSFWRTFITVPFESGDFMRALDVVQTVLEPLVLRRTKDMKTPDGEPLVLLPPKQIEIVNVELSETERDVYNYIFNKAKRTFSQNVEAGTVMKAFTTIFAQILRLRQSCCHPILVRNRDIVADEVEAGAAADAAAGLADDMDLESLITSFTAVTDKASKESNQTFGAHALEQIRDEAENECPLCFEEPMNDQTVTGCWHSACKKCLLDYIKHQTDKAEVPRCFSCREPINKRDLFEVVRHDDDSDMMSKKPRISLQRVGVNASSAKVVALMSELRALRREHPKMKSVVFSQFTSFLSLIEPALTRANIKFLRLDGSMAQKARAAVLNEFTEKKGFTILLLSLRAGGVGLNLTSAGRVFMMDPWWSFAVEAQAIDRVHRMGQEAEVQVKRFVVKESVEERMLKVQERKKFIATSLGMMNDEEKKLQRIEDIKELLS</sequence>
<feature type="chain" id="PRO_0000056124" description="DNA repair protein RAD5">
    <location>
        <begin position="1"/>
        <end position="1154"/>
    </location>
</feature>
<feature type="domain" description="Helicase ATP-binding" evidence="3">
    <location>
        <begin position="506"/>
        <end position="716"/>
    </location>
</feature>
<feature type="domain" description="Helicase C-terminal" evidence="4">
    <location>
        <begin position="988"/>
        <end position="1144"/>
    </location>
</feature>
<feature type="zinc finger region" description="RING-type" evidence="2">
    <location>
        <begin position="900"/>
        <end position="945"/>
    </location>
</feature>
<feature type="region of interest" description="Disordered" evidence="5">
    <location>
        <begin position="1"/>
        <end position="98"/>
    </location>
</feature>
<feature type="region of interest" description="Disordered" evidence="5">
    <location>
        <begin position="143"/>
        <end position="167"/>
    </location>
</feature>
<feature type="region of interest" description="Disordered" evidence="5">
    <location>
        <begin position="211"/>
        <end position="235"/>
    </location>
</feature>
<feature type="region of interest" description="Disordered" evidence="5">
    <location>
        <begin position="367"/>
        <end position="407"/>
    </location>
</feature>
<feature type="short sequence motif" description="DEAH box">
    <location>
        <begin position="667"/>
        <end position="670"/>
    </location>
</feature>
<feature type="compositionally biased region" description="Basic and acidic residues" evidence="5">
    <location>
        <begin position="13"/>
        <end position="23"/>
    </location>
</feature>
<feature type="compositionally biased region" description="Basic and acidic residues" evidence="5">
    <location>
        <begin position="52"/>
        <end position="74"/>
    </location>
</feature>
<feature type="compositionally biased region" description="Polar residues" evidence="5">
    <location>
        <begin position="75"/>
        <end position="98"/>
    </location>
</feature>
<feature type="compositionally biased region" description="Basic and acidic residues" evidence="5">
    <location>
        <begin position="373"/>
        <end position="382"/>
    </location>
</feature>
<feature type="compositionally biased region" description="Polar residues" evidence="5">
    <location>
        <begin position="383"/>
        <end position="398"/>
    </location>
</feature>
<feature type="binding site" evidence="3">
    <location>
        <begin position="519"/>
        <end position="526"/>
    </location>
    <ligand>
        <name>ATP</name>
        <dbReference type="ChEBI" id="CHEBI:30616"/>
    </ligand>
</feature>
<comment type="function">
    <text evidence="1">Probable helicase, member of the UBC2/RAD6 epistasis group. Functions with DNA repair protein RAD18 in error-free postreplication DNA repair. Involved in the maintenance of wild-type rates of instability of simple repetitive sequences such as poly(GT) repeats. Seems to be involved in maintaining a balance which acts in favor of error-prone non-homologous joining during DNA double-strand breaks repairs (By similarity).</text>
</comment>
<comment type="subcellular location">
    <subcellularLocation>
        <location evidence="1">Cytoplasm</location>
    </subcellularLocation>
    <subcellularLocation>
        <location evidence="1">Nucleus</location>
    </subcellularLocation>
</comment>
<comment type="similarity">
    <text evidence="6">Belongs to the SNF2/RAD54 helicase family.</text>
</comment>
<keyword id="KW-0067">ATP-binding</keyword>
<keyword id="KW-0963">Cytoplasm</keyword>
<keyword id="KW-0227">DNA damage</keyword>
<keyword id="KW-0234">DNA repair</keyword>
<keyword id="KW-0238">DNA-binding</keyword>
<keyword id="KW-0347">Helicase</keyword>
<keyword id="KW-0378">Hydrolase</keyword>
<keyword id="KW-0479">Metal-binding</keyword>
<keyword id="KW-0547">Nucleotide-binding</keyword>
<keyword id="KW-0539">Nucleus</keyword>
<keyword id="KW-1185">Reference proteome</keyword>
<keyword id="KW-0862">Zinc</keyword>
<keyword id="KW-0863">Zinc-finger</keyword>
<evidence type="ECO:0000250" key="1"/>
<evidence type="ECO:0000255" key="2">
    <source>
        <dbReference type="PROSITE-ProRule" id="PRU00175"/>
    </source>
</evidence>
<evidence type="ECO:0000255" key="3">
    <source>
        <dbReference type="PROSITE-ProRule" id="PRU00541"/>
    </source>
</evidence>
<evidence type="ECO:0000255" key="4">
    <source>
        <dbReference type="PROSITE-ProRule" id="PRU00542"/>
    </source>
</evidence>
<evidence type="ECO:0000256" key="5">
    <source>
        <dbReference type="SAM" id="MobiDB-lite"/>
    </source>
</evidence>
<evidence type="ECO:0000305" key="6"/>
<accession>Q4IJ84</accession>
<accession>A0A098D800</accession>
<accession>A0A0E0RUZ9</accession>
<accession>V6R2R3</accession>
<proteinExistence type="inferred from homology"/>
<gene>
    <name type="primary">RAD5</name>
    <name type="ORF">FGRRES_02724</name>
    <name type="ORF">FGSG_02724</name>
</gene>
<reference key="1">
    <citation type="journal article" date="2007" name="Science">
        <title>The Fusarium graminearum genome reveals a link between localized polymorphism and pathogen specialization.</title>
        <authorList>
            <person name="Cuomo C.A."/>
            <person name="Gueldener U."/>
            <person name="Xu J.-R."/>
            <person name="Trail F."/>
            <person name="Turgeon B.G."/>
            <person name="Di Pietro A."/>
            <person name="Walton J.D."/>
            <person name="Ma L.-J."/>
            <person name="Baker S.E."/>
            <person name="Rep M."/>
            <person name="Adam G."/>
            <person name="Antoniw J."/>
            <person name="Baldwin T."/>
            <person name="Calvo S.E."/>
            <person name="Chang Y.-L."/>
            <person name="DeCaprio D."/>
            <person name="Gale L.R."/>
            <person name="Gnerre S."/>
            <person name="Goswami R.S."/>
            <person name="Hammond-Kosack K."/>
            <person name="Harris L.J."/>
            <person name="Hilburn K."/>
            <person name="Kennell J.C."/>
            <person name="Kroken S."/>
            <person name="Magnuson J.K."/>
            <person name="Mannhaupt G."/>
            <person name="Mauceli E.W."/>
            <person name="Mewes H.-W."/>
            <person name="Mitterbauer R."/>
            <person name="Muehlbauer G."/>
            <person name="Muensterkoetter M."/>
            <person name="Nelson D."/>
            <person name="O'Donnell K."/>
            <person name="Ouellet T."/>
            <person name="Qi W."/>
            <person name="Quesneville H."/>
            <person name="Roncero M.I.G."/>
            <person name="Seong K.-Y."/>
            <person name="Tetko I.V."/>
            <person name="Urban M."/>
            <person name="Waalwijk C."/>
            <person name="Ward T.J."/>
            <person name="Yao J."/>
            <person name="Birren B.W."/>
            <person name="Kistler H.C."/>
        </authorList>
    </citation>
    <scope>NUCLEOTIDE SEQUENCE [LARGE SCALE GENOMIC DNA]</scope>
    <source>
        <strain>ATCC MYA-4620 / CBS 123657 / FGSC 9075 / NRRL 31084 / PH-1</strain>
    </source>
</reference>
<reference key="2">
    <citation type="journal article" date="2010" name="Nature">
        <title>Comparative genomics reveals mobile pathogenicity chromosomes in Fusarium.</title>
        <authorList>
            <person name="Ma L.-J."/>
            <person name="van der Does H.C."/>
            <person name="Borkovich K.A."/>
            <person name="Coleman J.J."/>
            <person name="Daboussi M.-J."/>
            <person name="Di Pietro A."/>
            <person name="Dufresne M."/>
            <person name="Freitag M."/>
            <person name="Grabherr M."/>
            <person name="Henrissat B."/>
            <person name="Houterman P.M."/>
            <person name="Kang S."/>
            <person name="Shim W.-B."/>
            <person name="Woloshuk C."/>
            <person name="Xie X."/>
            <person name="Xu J.-R."/>
            <person name="Antoniw J."/>
            <person name="Baker S.E."/>
            <person name="Bluhm B.H."/>
            <person name="Breakspear A."/>
            <person name="Brown D.W."/>
            <person name="Butchko R.A.E."/>
            <person name="Chapman S."/>
            <person name="Coulson R."/>
            <person name="Coutinho P.M."/>
            <person name="Danchin E.G.J."/>
            <person name="Diener A."/>
            <person name="Gale L.R."/>
            <person name="Gardiner D.M."/>
            <person name="Goff S."/>
            <person name="Hammond-Kosack K.E."/>
            <person name="Hilburn K."/>
            <person name="Hua-Van A."/>
            <person name="Jonkers W."/>
            <person name="Kazan K."/>
            <person name="Kodira C.D."/>
            <person name="Koehrsen M."/>
            <person name="Kumar L."/>
            <person name="Lee Y.-H."/>
            <person name="Li L."/>
            <person name="Manners J.M."/>
            <person name="Miranda-Saavedra D."/>
            <person name="Mukherjee M."/>
            <person name="Park G."/>
            <person name="Park J."/>
            <person name="Park S.-Y."/>
            <person name="Proctor R.H."/>
            <person name="Regev A."/>
            <person name="Ruiz-Roldan M.C."/>
            <person name="Sain D."/>
            <person name="Sakthikumar S."/>
            <person name="Sykes S."/>
            <person name="Schwartz D.C."/>
            <person name="Turgeon B.G."/>
            <person name="Wapinski I."/>
            <person name="Yoder O."/>
            <person name="Young S."/>
            <person name="Zeng Q."/>
            <person name="Zhou S."/>
            <person name="Galagan J."/>
            <person name="Cuomo C.A."/>
            <person name="Kistler H.C."/>
            <person name="Rep M."/>
        </authorList>
    </citation>
    <scope>GENOME REANNOTATION</scope>
    <source>
        <strain>ATCC MYA-4620 / CBS 123657 / FGSC 9075 / NRRL 31084 / PH-1</strain>
    </source>
</reference>
<reference key="3">
    <citation type="journal article" date="2015" name="BMC Genomics">
        <title>The completed genome sequence of the pathogenic ascomycete fungus Fusarium graminearum.</title>
        <authorList>
            <person name="King R."/>
            <person name="Urban M."/>
            <person name="Hammond-Kosack M.C.U."/>
            <person name="Hassani-Pak K."/>
            <person name="Hammond-Kosack K.E."/>
        </authorList>
    </citation>
    <scope>NUCLEOTIDE SEQUENCE [LARGE SCALE GENOMIC DNA]</scope>
    <source>
        <strain>ATCC MYA-4620 / CBS 123657 / FGSC 9075 / NRRL 31084 / PH-1</strain>
    </source>
</reference>
<dbReference type="EC" id="3.6.4.-"/>
<dbReference type="EMBL" id="DS231663">
    <property type="protein sequence ID" value="ESU08197.1"/>
    <property type="molecule type" value="Genomic_DNA"/>
</dbReference>
<dbReference type="EMBL" id="HG970332">
    <property type="protein sequence ID" value="CEF75074.1"/>
    <property type="molecule type" value="Genomic_DNA"/>
</dbReference>
<dbReference type="RefSeq" id="XP_011318682.1">
    <property type="nucleotide sequence ID" value="XM_011320380.1"/>
</dbReference>
<dbReference type="SMR" id="Q4IJ84"/>
<dbReference type="FunCoup" id="Q4IJ84">
    <property type="interactions" value="1055"/>
</dbReference>
<dbReference type="STRING" id="229533.Q4IJ84"/>
<dbReference type="GeneID" id="23550087"/>
<dbReference type="KEGG" id="fgr:FGSG_02724"/>
<dbReference type="VEuPathDB" id="FungiDB:FGRAMPH1_01G06539"/>
<dbReference type="eggNOG" id="KOG1001">
    <property type="taxonomic scope" value="Eukaryota"/>
</dbReference>
<dbReference type="HOGENOM" id="CLU_000315_2_5_1"/>
<dbReference type="InParanoid" id="Q4IJ84"/>
<dbReference type="OrthoDB" id="121101at110618"/>
<dbReference type="Proteomes" id="UP000070720">
    <property type="component" value="Chromosome 1"/>
</dbReference>
<dbReference type="GO" id="GO:0005737">
    <property type="term" value="C:cytoplasm"/>
    <property type="evidence" value="ECO:0007669"/>
    <property type="project" value="UniProtKB-SubCell"/>
</dbReference>
<dbReference type="GO" id="GO:0005634">
    <property type="term" value="C:nucleus"/>
    <property type="evidence" value="ECO:0007669"/>
    <property type="project" value="UniProtKB-SubCell"/>
</dbReference>
<dbReference type="GO" id="GO:0005524">
    <property type="term" value="F:ATP binding"/>
    <property type="evidence" value="ECO:0007669"/>
    <property type="project" value="UniProtKB-KW"/>
</dbReference>
<dbReference type="GO" id="GO:0008094">
    <property type="term" value="F:ATP-dependent activity, acting on DNA"/>
    <property type="evidence" value="ECO:0007669"/>
    <property type="project" value="TreeGrafter"/>
</dbReference>
<dbReference type="GO" id="GO:0003677">
    <property type="term" value="F:DNA binding"/>
    <property type="evidence" value="ECO:0007669"/>
    <property type="project" value="UniProtKB-KW"/>
</dbReference>
<dbReference type="GO" id="GO:0004386">
    <property type="term" value="F:helicase activity"/>
    <property type="evidence" value="ECO:0007669"/>
    <property type="project" value="UniProtKB-KW"/>
</dbReference>
<dbReference type="GO" id="GO:0016818">
    <property type="term" value="F:hydrolase activity, acting on acid anhydrides, in phosphorus-containing anhydrides"/>
    <property type="evidence" value="ECO:0007669"/>
    <property type="project" value="InterPro"/>
</dbReference>
<dbReference type="GO" id="GO:0008270">
    <property type="term" value="F:zinc ion binding"/>
    <property type="evidence" value="ECO:0007669"/>
    <property type="project" value="UniProtKB-KW"/>
</dbReference>
<dbReference type="GO" id="GO:0006281">
    <property type="term" value="P:DNA repair"/>
    <property type="evidence" value="ECO:0007669"/>
    <property type="project" value="UniProtKB-KW"/>
</dbReference>
<dbReference type="CDD" id="cd18008">
    <property type="entry name" value="DEXDc_SHPRH-like"/>
    <property type="match status" value="1"/>
</dbReference>
<dbReference type="CDD" id="cd16572">
    <property type="entry name" value="RING-HC_SpRad8-like"/>
    <property type="match status" value="1"/>
</dbReference>
<dbReference type="CDD" id="cd18793">
    <property type="entry name" value="SF2_C_SNF"/>
    <property type="match status" value="1"/>
</dbReference>
<dbReference type="Gene3D" id="3.40.50.300">
    <property type="entry name" value="P-loop containing nucleotide triphosphate hydrolases"/>
    <property type="match status" value="1"/>
</dbReference>
<dbReference type="Gene3D" id="3.40.50.10810">
    <property type="entry name" value="Tandem AAA-ATPase domain"/>
    <property type="match status" value="1"/>
</dbReference>
<dbReference type="Gene3D" id="3.30.40.10">
    <property type="entry name" value="Zinc/RING finger domain, C3HC4 (zinc finger)"/>
    <property type="match status" value="1"/>
</dbReference>
<dbReference type="InterPro" id="IPR014001">
    <property type="entry name" value="Helicase_ATP-bd"/>
</dbReference>
<dbReference type="InterPro" id="IPR001650">
    <property type="entry name" value="Helicase_C-like"/>
</dbReference>
<dbReference type="InterPro" id="IPR014905">
    <property type="entry name" value="HIRAN"/>
</dbReference>
<dbReference type="InterPro" id="IPR027417">
    <property type="entry name" value="P-loop_NTPase"/>
</dbReference>
<dbReference type="InterPro" id="IPR038718">
    <property type="entry name" value="SNF2-like_sf"/>
</dbReference>
<dbReference type="InterPro" id="IPR049730">
    <property type="entry name" value="SNF2/RAD54-like_C"/>
</dbReference>
<dbReference type="InterPro" id="IPR000330">
    <property type="entry name" value="SNF2_N"/>
</dbReference>
<dbReference type="InterPro" id="IPR050628">
    <property type="entry name" value="SNF2_RAD54_helicase_TF"/>
</dbReference>
<dbReference type="InterPro" id="IPR001841">
    <property type="entry name" value="Znf_RING"/>
</dbReference>
<dbReference type="InterPro" id="IPR013083">
    <property type="entry name" value="Znf_RING/FYVE/PHD"/>
</dbReference>
<dbReference type="PANTHER" id="PTHR45626:SF22">
    <property type="entry name" value="DNA REPAIR PROTEIN RAD5"/>
    <property type="match status" value="1"/>
</dbReference>
<dbReference type="PANTHER" id="PTHR45626">
    <property type="entry name" value="TRANSCRIPTION TERMINATION FACTOR 2-RELATED"/>
    <property type="match status" value="1"/>
</dbReference>
<dbReference type="Pfam" id="PF00271">
    <property type="entry name" value="Helicase_C"/>
    <property type="match status" value="1"/>
</dbReference>
<dbReference type="Pfam" id="PF08797">
    <property type="entry name" value="HIRAN"/>
    <property type="match status" value="1"/>
</dbReference>
<dbReference type="Pfam" id="PF00176">
    <property type="entry name" value="SNF2-rel_dom"/>
    <property type="match status" value="1"/>
</dbReference>
<dbReference type="Pfam" id="PF24975">
    <property type="entry name" value="UBA_Rad5"/>
    <property type="match status" value="1"/>
</dbReference>
<dbReference type="SMART" id="SM00487">
    <property type="entry name" value="DEXDc"/>
    <property type="match status" value="1"/>
</dbReference>
<dbReference type="SMART" id="SM00490">
    <property type="entry name" value="HELICc"/>
    <property type="match status" value="1"/>
</dbReference>
<dbReference type="SMART" id="SM00910">
    <property type="entry name" value="HIRAN"/>
    <property type="match status" value="1"/>
</dbReference>
<dbReference type="SUPFAM" id="SSF52540">
    <property type="entry name" value="P-loop containing nucleoside triphosphate hydrolases"/>
    <property type="match status" value="2"/>
</dbReference>
<dbReference type="SUPFAM" id="SSF57850">
    <property type="entry name" value="RING/U-box"/>
    <property type="match status" value="1"/>
</dbReference>
<dbReference type="PROSITE" id="PS51192">
    <property type="entry name" value="HELICASE_ATP_BIND_1"/>
    <property type="match status" value="1"/>
</dbReference>
<dbReference type="PROSITE" id="PS51194">
    <property type="entry name" value="HELICASE_CTER"/>
    <property type="match status" value="1"/>
</dbReference>
<dbReference type="PROSITE" id="PS50089">
    <property type="entry name" value="ZF_RING_2"/>
    <property type="match status" value="1"/>
</dbReference>
<organism>
    <name type="scientific">Gibberella zeae (strain ATCC MYA-4620 / CBS 123657 / FGSC 9075 / NRRL 31084 / PH-1)</name>
    <name type="common">Wheat head blight fungus</name>
    <name type="synonym">Fusarium graminearum</name>
    <dbReference type="NCBI Taxonomy" id="229533"/>
    <lineage>
        <taxon>Eukaryota</taxon>
        <taxon>Fungi</taxon>
        <taxon>Dikarya</taxon>
        <taxon>Ascomycota</taxon>
        <taxon>Pezizomycotina</taxon>
        <taxon>Sordariomycetes</taxon>
        <taxon>Hypocreomycetidae</taxon>
        <taxon>Hypocreales</taxon>
        <taxon>Nectriaceae</taxon>
        <taxon>Fusarium</taxon>
    </lineage>
</organism>